<keyword id="KW-0066">ATP synthesis</keyword>
<keyword id="KW-1003">Cell membrane</keyword>
<keyword id="KW-0139">CF(1)</keyword>
<keyword id="KW-0375">Hydrogen ion transport</keyword>
<keyword id="KW-0406">Ion transport</keyword>
<keyword id="KW-0472">Membrane</keyword>
<keyword id="KW-0813">Transport</keyword>
<sequence length="139" mass="15638">MAQLTVQIVTPDGLVYDHHASYVSVRTLDGEMGILPRHENMIAVLAVDEVKVKRIDDKDHVNWIAVNGGVIEIANDMITIVADSAERARDIDISRAERAKLRAERAIEEAQDKHLIDQERRAKIALQRAINRINVGNRL</sequence>
<comment type="function">
    <text evidence="1">Produces ATP from ADP in the presence of a proton gradient across the membrane.</text>
</comment>
<comment type="subunit">
    <text evidence="1">F-type ATPases have 2 components, CF(1) - the catalytic core - and CF(0) - the membrane proton channel. CF(1) has five subunits: alpha(3), beta(3), gamma(1), delta(1), epsilon(1). CF(0) has three main subunits: a, b and c.</text>
</comment>
<comment type="subcellular location">
    <subcellularLocation>
        <location evidence="1">Cell membrane</location>
        <topology evidence="1">Peripheral membrane protein</topology>
    </subcellularLocation>
</comment>
<comment type="similarity">
    <text evidence="1">Belongs to the ATPase epsilon chain family.</text>
</comment>
<proteinExistence type="inferred from homology"/>
<dbReference type="EMBL" id="CP000936">
    <property type="protein sequence ID" value="ACA36976.1"/>
    <property type="molecule type" value="Genomic_DNA"/>
</dbReference>
<dbReference type="RefSeq" id="WP_000068050.1">
    <property type="nucleotide sequence ID" value="NC_010380.1"/>
</dbReference>
<dbReference type="SMR" id="B1ICS8"/>
<dbReference type="KEGG" id="spv:SPH_1618"/>
<dbReference type="HOGENOM" id="CLU_084338_1_0_9"/>
<dbReference type="Proteomes" id="UP000002163">
    <property type="component" value="Chromosome"/>
</dbReference>
<dbReference type="GO" id="GO:0005886">
    <property type="term" value="C:plasma membrane"/>
    <property type="evidence" value="ECO:0007669"/>
    <property type="project" value="UniProtKB-SubCell"/>
</dbReference>
<dbReference type="GO" id="GO:0045259">
    <property type="term" value="C:proton-transporting ATP synthase complex"/>
    <property type="evidence" value="ECO:0007669"/>
    <property type="project" value="UniProtKB-KW"/>
</dbReference>
<dbReference type="GO" id="GO:0005524">
    <property type="term" value="F:ATP binding"/>
    <property type="evidence" value="ECO:0007669"/>
    <property type="project" value="UniProtKB-UniRule"/>
</dbReference>
<dbReference type="GO" id="GO:0046933">
    <property type="term" value="F:proton-transporting ATP synthase activity, rotational mechanism"/>
    <property type="evidence" value="ECO:0007669"/>
    <property type="project" value="UniProtKB-UniRule"/>
</dbReference>
<dbReference type="CDD" id="cd12152">
    <property type="entry name" value="F1-ATPase_delta"/>
    <property type="match status" value="1"/>
</dbReference>
<dbReference type="FunFam" id="1.20.5.440:FF:000001">
    <property type="entry name" value="ATP synthase epsilon chain"/>
    <property type="match status" value="1"/>
</dbReference>
<dbReference type="Gene3D" id="1.20.5.440">
    <property type="entry name" value="ATP synthase delta/epsilon subunit, C-terminal domain"/>
    <property type="match status" value="1"/>
</dbReference>
<dbReference type="Gene3D" id="2.60.15.10">
    <property type="entry name" value="F0F1 ATP synthase delta/epsilon subunit, N-terminal"/>
    <property type="match status" value="1"/>
</dbReference>
<dbReference type="HAMAP" id="MF_00530">
    <property type="entry name" value="ATP_synth_epsil_bac"/>
    <property type="match status" value="1"/>
</dbReference>
<dbReference type="InterPro" id="IPR001469">
    <property type="entry name" value="ATP_synth_F1_dsu/esu"/>
</dbReference>
<dbReference type="InterPro" id="IPR020546">
    <property type="entry name" value="ATP_synth_F1_dsu/esu_N"/>
</dbReference>
<dbReference type="InterPro" id="IPR020547">
    <property type="entry name" value="ATP_synth_F1_esu_C"/>
</dbReference>
<dbReference type="InterPro" id="IPR036771">
    <property type="entry name" value="ATPsynth_dsu/esu_N"/>
</dbReference>
<dbReference type="NCBIfam" id="TIGR01216">
    <property type="entry name" value="ATP_synt_epsi"/>
    <property type="match status" value="1"/>
</dbReference>
<dbReference type="NCBIfam" id="NF001846">
    <property type="entry name" value="PRK00571.1-3"/>
    <property type="match status" value="1"/>
</dbReference>
<dbReference type="PANTHER" id="PTHR13822">
    <property type="entry name" value="ATP SYNTHASE DELTA/EPSILON CHAIN"/>
    <property type="match status" value="1"/>
</dbReference>
<dbReference type="PANTHER" id="PTHR13822:SF10">
    <property type="entry name" value="ATP SYNTHASE EPSILON CHAIN, CHLOROPLASTIC"/>
    <property type="match status" value="1"/>
</dbReference>
<dbReference type="Pfam" id="PF00401">
    <property type="entry name" value="ATP-synt_DE"/>
    <property type="match status" value="1"/>
</dbReference>
<dbReference type="Pfam" id="PF02823">
    <property type="entry name" value="ATP-synt_DE_N"/>
    <property type="match status" value="1"/>
</dbReference>
<dbReference type="SUPFAM" id="SSF51344">
    <property type="entry name" value="Epsilon subunit of F1F0-ATP synthase N-terminal domain"/>
    <property type="match status" value="1"/>
</dbReference>
<organism>
    <name type="scientific">Streptococcus pneumoniae (strain Hungary19A-6)</name>
    <dbReference type="NCBI Taxonomy" id="487214"/>
    <lineage>
        <taxon>Bacteria</taxon>
        <taxon>Bacillati</taxon>
        <taxon>Bacillota</taxon>
        <taxon>Bacilli</taxon>
        <taxon>Lactobacillales</taxon>
        <taxon>Streptococcaceae</taxon>
        <taxon>Streptococcus</taxon>
    </lineage>
</organism>
<reference key="1">
    <citation type="journal article" date="2010" name="Genome Biol.">
        <title>Structure and dynamics of the pan-genome of Streptococcus pneumoniae and closely related species.</title>
        <authorList>
            <person name="Donati C."/>
            <person name="Hiller N.L."/>
            <person name="Tettelin H."/>
            <person name="Muzzi A."/>
            <person name="Croucher N.J."/>
            <person name="Angiuoli S.V."/>
            <person name="Oggioni M."/>
            <person name="Dunning Hotopp J.C."/>
            <person name="Hu F.Z."/>
            <person name="Riley D.R."/>
            <person name="Covacci A."/>
            <person name="Mitchell T.J."/>
            <person name="Bentley S.D."/>
            <person name="Kilian M."/>
            <person name="Ehrlich G.D."/>
            <person name="Rappuoli R."/>
            <person name="Moxon E.R."/>
            <person name="Masignani V."/>
        </authorList>
    </citation>
    <scope>NUCLEOTIDE SEQUENCE [LARGE SCALE GENOMIC DNA]</scope>
    <source>
        <strain>Hungary19A-6</strain>
    </source>
</reference>
<protein>
    <recommendedName>
        <fullName evidence="1">ATP synthase epsilon chain</fullName>
    </recommendedName>
    <alternativeName>
        <fullName evidence="1">ATP synthase F1 sector epsilon subunit</fullName>
    </alternativeName>
    <alternativeName>
        <fullName evidence="1">F-ATPase epsilon subunit</fullName>
    </alternativeName>
</protein>
<gene>
    <name evidence="1" type="primary">atpC</name>
    <name type="ordered locus">SPH_1618</name>
</gene>
<evidence type="ECO:0000255" key="1">
    <source>
        <dbReference type="HAMAP-Rule" id="MF_00530"/>
    </source>
</evidence>
<feature type="chain" id="PRO_1000127898" description="ATP synthase epsilon chain">
    <location>
        <begin position="1"/>
        <end position="139"/>
    </location>
</feature>
<name>ATPE_STRPI</name>
<accession>B1ICS8</accession>